<sequence length="451" mass="48733">MGLEPSWYLLLCLAVSGAAGTDPPTAPTTAERQRQPTDIILDCFLVTEDRHRGAFASSGDRERALLVLKQVPVLDDGSLEGITDFQGSTETKQDSPVIFEASVDLVQIPQAEALLHADCSGKAVTCEISKYFLQARQEATFEKAHWFISNMQVSRGGPSVSMVMKTLRDAEVGAVRHPTLNLPLSAQGTVKTQVEFQVTSETQTLNHLLGSSVSLHCSFSMAPGLDLTGVEWRLQHKGSGQLVYSWKTGQGQAKRKGATLEPEELLRAGNASLTLPNLTLKDEGNYICQISTSLYQAQQIMPLNILAPPKIQLHLANKDPLPSLVCSIAGYYPLDVGVTWIREELGGIPAQVSGASFSSLRQSTMGTYSISSTVMADPGPTGATYTCQVAHVSLEEPLTTSMRVLPNPEQRGTLGVIFASIIFLSALLLFLGLHRQQASSSRSTRPMRHSG</sequence>
<proteinExistence type="evidence at protein level"/>
<accession>Q8VD31</accession>
<accession>E9QN33</accession>
<gene>
    <name type="primary">Tapbpl</name>
</gene>
<feature type="signal peptide" evidence="3">
    <location>
        <begin position="1"/>
        <end position="20"/>
    </location>
</feature>
<feature type="chain" id="PRO_0000014994" description="Tapasin-related protein">
    <location>
        <begin position="21"/>
        <end position="451"/>
    </location>
</feature>
<feature type="topological domain" description="Lumenal" evidence="3">
    <location>
        <begin position="21"/>
        <end position="412"/>
    </location>
</feature>
<feature type="transmembrane region" description="Helical" evidence="3">
    <location>
        <begin position="413"/>
        <end position="433"/>
    </location>
</feature>
<feature type="topological domain" description="Cytoplasmic" evidence="3">
    <location>
        <begin position="434"/>
        <end position="451"/>
    </location>
</feature>
<feature type="domain" description="Ig-like V-type">
    <location>
        <begin position="196"/>
        <end position="301"/>
    </location>
</feature>
<feature type="domain" description="Ig-like C1-type">
    <location>
        <begin position="302"/>
        <end position="399"/>
    </location>
</feature>
<feature type="glycosylation site" description="N-linked (GlcNAc...) asparagine" evidence="3">
    <location>
        <position position="270"/>
    </location>
</feature>
<feature type="glycosylation site" description="N-linked (GlcNAc...) asparagine" evidence="3">
    <location>
        <position position="277"/>
    </location>
</feature>
<feature type="disulfide bond" evidence="4">
    <location>
        <begin position="217"/>
        <end position="288"/>
    </location>
</feature>
<feature type="disulfide bond" evidence="4">
    <location>
        <begin position="326"/>
        <end position="387"/>
    </location>
</feature>
<feature type="sequence conflict" description="In Ref. 2; AAH17613." evidence="6" ref="2">
    <original>V</original>
    <variation>L</variation>
    <location>
        <position position="103"/>
    </location>
</feature>
<feature type="sequence conflict" description="In Ref. 2; AAH17613." evidence="6" ref="2">
    <original>G</original>
    <variation>D</variation>
    <location>
        <position position="224"/>
    </location>
</feature>
<feature type="sequence conflict" description="In Ref. 2; AAH17613." evidence="6" ref="2">
    <original>N</original>
    <variation>T</variation>
    <location>
        <position position="285"/>
    </location>
</feature>
<feature type="sequence conflict" description="In Ref. 2; AAH17613." evidence="6" ref="2">
    <original>I</original>
    <variation>V</variation>
    <location>
        <position position="311"/>
    </location>
</feature>
<evidence type="ECO:0000250" key="1"/>
<evidence type="ECO:0000250" key="2">
    <source>
        <dbReference type="UniProtKB" id="Q9BX59"/>
    </source>
</evidence>
<evidence type="ECO:0000255" key="3"/>
<evidence type="ECO:0000255" key="4">
    <source>
        <dbReference type="PROSITE-ProRule" id="PRU00114"/>
    </source>
</evidence>
<evidence type="ECO:0000269" key="5">
    <source>
    </source>
</evidence>
<evidence type="ECO:0000305" key="6"/>
<keyword id="KW-1003">Cell membrane</keyword>
<keyword id="KW-1015">Disulfide bond</keyword>
<keyword id="KW-0256">Endoplasmic reticulum</keyword>
<keyword id="KW-0325">Glycoprotein</keyword>
<keyword id="KW-0333">Golgi apparatus</keyword>
<keyword id="KW-0391">Immunity</keyword>
<keyword id="KW-0393">Immunoglobulin domain</keyword>
<keyword id="KW-0472">Membrane</keyword>
<keyword id="KW-0492">Microsome</keyword>
<keyword id="KW-1185">Reference proteome</keyword>
<keyword id="KW-0677">Repeat</keyword>
<keyword id="KW-0732">Signal</keyword>
<keyword id="KW-0812">Transmembrane</keyword>
<keyword id="KW-1133">Transmembrane helix</keyword>
<comment type="function">
    <text evidence="2">Component of the antigen processing and presentation pathway, which binds to MHC class I coupled with beta2-microglobulin/B2M. Association between TAPBPR and MHC class I occurs in the absence of a functional peptide-loading complex (PLC). Expression seems to slow down and down-regulate MHC class I surface expression.</text>
</comment>
<comment type="subunit">
    <text evidence="2">Interacts with peptide-free HLA-A*02-B2M complexes or those loaded with low affinity peptides, likely facilitating peptide exchange onto higher affinity peptides. Interacts with MR1 in a ligand-independent way; this interaction may stabilize MR1 pool and facilitate ligand loading and dissociation.</text>
</comment>
<comment type="subcellular location">
    <subcellularLocation>
        <location evidence="2">Cell membrane</location>
        <topology evidence="1">Single-pass type I membrane protein</topology>
    </subcellularLocation>
    <subcellularLocation>
        <location evidence="2">Endoplasmic reticulum membrane</location>
        <topology evidence="1">Single-pass type I membrane protein</topology>
    </subcellularLocation>
    <subcellularLocation>
        <location evidence="2">Microsome membrane</location>
        <topology evidence="2">Single-pass type I membrane protein</topology>
    </subcellularLocation>
    <subcellularLocation>
        <location evidence="2">Golgi apparatus membrane</location>
        <topology evidence="2">Single-pass type I membrane protein</topology>
    </subcellularLocation>
    <text evidence="2">Mainly found in endoplasmic reticulum but a minority is found on the cell surface.</text>
</comment>
<comment type="tissue specificity">
    <text evidence="5">Widely expressed.</text>
</comment>
<name>TPSNR_MOUSE</name>
<dbReference type="EMBL" id="AC140324">
    <property type="status" value="NOT_ANNOTATED_CDS"/>
    <property type="molecule type" value="Genomic_DNA"/>
</dbReference>
<dbReference type="EMBL" id="BC017613">
    <property type="protein sequence ID" value="AAH17613.1"/>
    <property type="molecule type" value="mRNA"/>
</dbReference>
<dbReference type="CCDS" id="CCDS20547.1"/>
<dbReference type="RefSeq" id="NP_663366.2">
    <property type="nucleotide sequence ID" value="NM_145391.2"/>
</dbReference>
<dbReference type="SMR" id="Q8VD31"/>
<dbReference type="BioGRID" id="229407">
    <property type="interactions" value="2"/>
</dbReference>
<dbReference type="FunCoup" id="Q8VD31">
    <property type="interactions" value="391"/>
</dbReference>
<dbReference type="STRING" id="10090.ENSMUSP00000047105"/>
<dbReference type="GlyCosmos" id="Q8VD31">
    <property type="glycosylation" value="2 sites, No reported glycans"/>
</dbReference>
<dbReference type="GlyGen" id="Q8VD31">
    <property type="glycosylation" value="3 sites, 2 N-linked glycans (2 sites)"/>
</dbReference>
<dbReference type="iPTMnet" id="Q8VD31"/>
<dbReference type="PhosphoSitePlus" id="Q8VD31"/>
<dbReference type="PaxDb" id="10090-ENSMUSP00000047105"/>
<dbReference type="PeptideAtlas" id="Q8VD31"/>
<dbReference type="ProteomicsDB" id="259074"/>
<dbReference type="Pumba" id="Q8VD31"/>
<dbReference type="Antibodypedia" id="22408">
    <property type="antibodies" value="356 antibodies from 23 providers"/>
</dbReference>
<dbReference type="Ensembl" id="ENSMUST00000043422.8">
    <property type="protein sequence ID" value="ENSMUSP00000047105.8"/>
    <property type="gene ID" value="ENSMUSG00000038213.8"/>
</dbReference>
<dbReference type="GeneID" id="213233"/>
<dbReference type="KEGG" id="mmu:213233"/>
<dbReference type="UCSC" id="uc009dua.1">
    <property type="organism name" value="mouse"/>
</dbReference>
<dbReference type="AGR" id="MGI:2384853"/>
<dbReference type="CTD" id="55080"/>
<dbReference type="MGI" id="MGI:2384853">
    <property type="gene designation" value="Tapbpl"/>
</dbReference>
<dbReference type="VEuPathDB" id="HostDB:ENSMUSG00000038213"/>
<dbReference type="eggNOG" id="ENOG502QSXA">
    <property type="taxonomic scope" value="Eukaryota"/>
</dbReference>
<dbReference type="GeneTree" id="ENSGT00940000160453"/>
<dbReference type="HOGENOM" id="CLU_033813_0_0_1"/>
<dbReference type="InParanoid" id="Q8VD31"/>
<dbReference type="OMA" id="YPLDAQM"/>
<dbReference type="OrthoDB" id="8929156at2759"/>
<dbReference type="PhylomeDB" id="Q8VD31"/>
<dbReference type="TreeFam" id="TF334274"/>
<dbReference type="BioGRID-ORCS" id="213233">
    <property type="hits" value="2 hits in 77 CRISPR screens"/>
</dbReference>
<dbReference type="PRO" id="PR:Q8VD31"/>
<dbReference type="Proteomes" id="UP000000589">
    <property type="component" value="Chromosome 6"/>
</dbReference>
<dbReference type="RNAct" id="Q8VD31">
    <property type="molecule type" value="protein"/>
</dbReference>
<dbReference type="Bgee" id="ENSMUSG00000038213">
    <property type="expression patterns" value="Expressed in lumbar dorsal root ganglion and 148 other cell types or tissues"/>
</dbReference>
<dbReference type="GO" id="GO:0005789">
    <property type="term" value="C:endoplasmic reticulum membrane"/>
    <property type="evidence" value="ECO:0007669"/>
    <property type="project" value="UniProtKB-SubCell"/>
</dbReference>
<dbReference type="GO" id="GO:0000139">
    <property type="term" value="C:Golgi membrane"/>
    <property type="evidence" value="ECO:0007669"/>
    <property type="project" value="UniProtKB-SubCell"/>
</dbReference>
<dbReference type="GO" id="GO:0005886">
    <property type="term" value="C:plasma membrane"/>
    <property type="evidence" value="ECO:0007669"/>
    <property type="project" value="UniProtKB-SubCell"/>
</dbReference>
<dbReference type="GO" id="GO:0023024">
    <property type="term" value="F:MHC class I protein complex binding"/>
    <property type="evidence" value="ECO:0007669"/>
    <property type="project" value="Ensembl"/>
</dbReference>
<dbReference type="GO" id="GO:0002590">
    <property type="term" value="P:negative regulation of antigen processing and presentation of peptide antigen via MHC class I"/>
    <property type="evidence" value="ECO:0007669"/>
    <property type="project" value="Ensembl"/>
</dbReference>
<dbReference type="GO" id="GO:0002502">
    <property type="term" value="P:peptide antigen assembly with MHC class I protein complex"/>
    <property type="evidence" value="ECO:0007669"/>
    <property type="project" value="Ensembl"/>
</dbReference>
<dbReference type="FunFam" id="2.60.40.10:FF:001475">
    <property type="entry name" value="TAP binding protein-like variant"/>
    <property type="match status" value="1"/>
</dbReference>
<dbReference type="Gene3D" id="2.60.40.10">
    <property type="entry name" value="Immunoglobulins"/>
    <property type="match status" value="3"/>
</dbReference>
<dbReference type="InterPro" id="IPR007110">
    <property type="entry name" value="Ig-like_dom"/>
</dbReference>
<dbReference type="InterPro" id="IPR036179">
    <property type="entry name" value="Ig-like_dom_sf"/>
</dbReference>
<dbReference type="InterPro" id="IPR013783">
    <property type="entry name" value="Ig-like_fold"/>
</dbReference>
<dbReference type="InterPro" id="IPR003006">
    <property type="entry name" value="Ig/MHC_CS"/>
</dbReference>
<dbReference type="InterPro" id="IPR003597">
    <property type="entry name" value="Ig_C1-set"/>
</dbReference>
<dbReference type="InterPro" id="IPR003599">
    <property type="entry name" value="Ig_sub"/>
</dbReference>
<dbReference type="InterPro" id="IPR013106">
    <property type="entry name" value="Ig_V-set"/>
</dbReference>
<dbReference type="InterPro" id="IPR050380">
    <property type="entry name" value="Immune_Resp_Modulators"/>
</dbReference>
<dbReference type="PANTHER" id="PTHR23411">
    <property type="entry name" value="TAPASIN"/>
    <property type="match status" value="1"/>
</dbReference>
<dbReference type="Pfam" id="PF07654">
    <property type="entry name" value="C1-set"/>
    <property type="match status" value="1"/>
</dbReference>
<dbReference type="Pfam" id="PF07686">
    <property type="entry name" value="V-set"/>
    <property type="match status" value="1"/>
</dbReference>
<dbReference type="SMART" id="SM00409">
    <property type="entry name" value="IG"/>
    <property type="match status" value="1"/>
</dbReference>
<dbReference type="SMART" id="SM00407">
    <property type="entry name" value="IGc1"/>
    <property type="match status" value="1"/>
</dbReference>
<dbReference type="SUPFAM" id="SSF48726">
    <property type="entry name" value="Immunoglobulin"/>
    <property type="match status" value="2"/>
</dbReference>
<dbReference type="PROSITE" id="PS50835">
    <property type="entry name" value="IG_LIKE"/>
    <property type="match status" value="2"/>
</dbReference>
<dbReference type="PROSITE" id="PS00290">
    <property type="entry name" value="IG_MHC"/>
    <property type="match status" value="1"/>
</dbReference>
<reference key="1">
    <citation type="journal article" date="2009" name="PLoS Biol.">
        <title>Lineage-specific biology revealed by a finished genome assembly of the mouse.</title>
        <authorList>
            <person name="Church D.M."/>
            <person name="Goodstadt L."/>
            <person name="Hillier L.W."/>
            <person name="Zody M.C."/>
            <person name="Goldstein S."/>
            <person name="She X."/>
            <person name="Bult C.J."/>
            <person name="Agarwala R."/>
            <person name="Cherry J.L."/>
            <person name="DiCuccio M."/>
            <person name="Hlavina W."/>
            <person name="Kapustin Y."/>
            <person name="Meric P."/>
            <person name="Maglott D."/>
            <person name="Birtle Z."/>
            <person name="Marques A.C."/>
            <person name="Graves T."/>
            <person name="Zhou S."/>
            <person name="Teague B."/>
            <person name="Potamousis K."/>
            <person name="Churas C."/>
            <person name="Place M."/>
            <person name="Herschleb J."/>
            <person name="Runnheim R."/>
            <person name="Forrest D."/>
            <person name="Amos-Landgraf J."/>
            <person name="Schwartz D.C."/>
            <person name="Cheng Z."/>
            <person name="Lindblad-Toh K."/>
            <person name="Eichler E.E."/>
            <person name="Ponting C.P."/>
        </authorList>
    </citation>
    <scope>NUCLEOTIDE SEQUENCE [LARGE SCALE GENOMIC DNA]</scope>
    <source>
        <strain>C57BL/6J</strain>
    </source>
</reference>
<reference key="2">
    <citation type="journal article" date="2004" name="Genome Res.">
        <title>The status, quality, and expansion of the NIH full-length cDNA project: the Mammalian Gene Collection (MGC).</title>
        <authorList>
            <consortium name="The MGC Project Team"/>
        </authorList>
    </citation>
    <scope>NUCLEOTIDE SEQUENCE [LARGE SCALE MRNA]</scope>
    <source>
        <strain>FVB/N</strain>
        <tissue>Salivary gland</tissue>
    </source>
</reference>
<reference key="3">
    <citation type="journal article" date="2002" name="Eur. J. Immunol.">
        <title>A human TAPBP (TAPASIN)-related gene, TAPBP-R.</title>
        <authorList>
            <person name="Teng M.S."/>
            <person name="Stephens R."/>
            <person name="Du Pasquier L."/>
            <person name="Freeman T."/>
            <person name="Lindquist J.A."/>
            <person name="Trowsdale J."/>
        </authorList>
    </citation>
    <scope>TISSUE SPECIFICITY</scope>
</reference>
<reference key="4">
    <citation type="journal article" date="2010" name="Cell">
        <title>A tissue-specific atlas of mouse protein phosphorylation and expression.</title>
        <authorList>
            <person name="Huttlin E.L."/>
            <person name="Jedrychowski M.P."/>
            <person name="Elias J.E."/>
            <person name="Goswami T."/>
            <person name="Rad R."/>
            <person name="Beausoleil S.A."/>
            <person name="Villen J."/>
            <person name="Haas W."/>
            <person name="Sowa M.E."/>
            <person name="Gygi S.P."/>
        </authorList>
    </citation>
    <scope>IDENTIFICATION BY MASS SPECTROMETRY [LARGE SCALE ANALYSIS]</scope>
    <source>
        <tissue>Brown adipose tissue</tissue>
    </source>
</reference>
<protein>
    <recommendedName>
        <fullName>Tapasin-related protein</fullName>
        <shortName>TAPASIN-R</shortName>
    </recommendedName>
    <alternativeName>
        <fullName>TAP-binding protein-like</fullName>
    </alternativeName>
    <alternativeName>
        <fullName>TAP-binding protein-related protein</fullName>
        <shortName>TAPBP-R</shortName>
    </alternativeName>
    <alternativeName>
        <fullName>Tapasin-like</fullName>
    </alternativeName>
</protein>
<organism>
    <name type="scientific">Mus musculus</name>
    <name type="common">Mouse</name>
    <dbReference type="NCBI Taxonomy" id="10090"/>
    <lineage>
        <taxon>Eukaryota</taxon>
        <taxon>Metazoa</taxon>
        <taxon>Chordata</taxon>
        <taxon>Craniata</taxon>
        <taxon>Vertebrata</taxon>
        <taxon>Euteleostomi</taxon>
        <taxon>Mammalia</taxon>
        <taxon>Eutheria</taxon>
        <taxon>Euarchontoglires</taxon>
        <taxon>Glires</taxon>
        <taxon>Rodentia</taxon>
        <taxon>Myomorpha</taxon>
        <taxon>Muroidea</taxon>
        <taxon>Muridae</taxon>
        <taxon>Murinae</taxon>
        <taxon>Mus</taxon>
        <taxon>Mus</taxon>
    </lineage>
</organism>